<evidence type="ECO:0000255" key="1">
    <source>
        <dbReference type="HAMAP-Rule" id="MF_01414"/>
    </source>
</evidence>
<protein>
    <recommendedName>
        <fullName evidence="1">Glutathione-regulated potassium-efflux system ancillary protein KefF</fullName>
    </recommendedName>
    <alternativeName>
        <fullName evidence="1">Quinone oxidoreductase KefF</fullName>
        <ecNumber evidence="1">1.6.5.2</ecNumber>
    </alternativeName>
</protein>
<name>KEFF_SALA4</name>
<organism>
    <name type="scientific">Salmonella agona (strain SL483)</name>
    <dbReference type="NCBI Taxonomy" id="454166"/>
    <lineage>
        <taxon>Bacteria</taxon>
        <taxon>Pseudomonadati</taxon>
        <taxon>Pseudomonadota</taxon>
        <taxon>Gammaproteobacteria</taxon>
        <taxon>Enterobacterales</taxon>
        <taxon>Enterobacteriaceae</taxon>
        <taxon>Salmonella</taxon>
    </lineage>
</organism>
<keyword id="KW-0997">Cell inner membrane</keyword>
<keyword id="KW-1003">Cell membrane</keyword>
<keyword id="KW-0285">Flavoprotein</keyword>
<keyword id="KW-0288">FMN</keyword>
<keyword id="KW-0472">Membrane</keyword>
<keyword id="KW-0520">NAD</keyword>
<keyword id="KW-0560">Oxidoreductase</keyword>
<accession>B5F766</accession>
<comment type="function">
    <text evidence="1">Regulatory subunit of a potassium efflux system that confers protection against electrophiles. Required for full activity of KefC. Shows redox enzymatic activity, but this enzymatic activity is not required for activation of KefC.</text>
</comment>
<comment type="catalytic activity">
    <reaction evidence="1">
        <text>a quinone + NADH + H(+) = a quinol + NAD(+)</text>
        <dbReference type="Rhea" id="RHEA:46160"/>
        <dbReference type="ChEBI" id="CHEBI:15378"/>
        <dbReference type="ChEBI" id="CHEBI:24646"/>
        <dbReference type="ChEBI" id="CHEBI:57540"/>
        <dbReference type="ChEBI" id="CHEBI:57945"/>
        <dbReference type="ChEBI" id="CHEBI:132124"/>
        <dbReference type="EC" id="1.6.5.2"/>
    </reaction>
</comment>
<comment type="catalytic activity">
    <reaction evidence="1">
        <text>a quinone + NADPH + H(+) = a quinol + NADP(+)</text>
        <dbReference type="Rhea" id="RHEA:46164"/>
        <dbReference type="ChEBI" id="CHEBI:15378"/>
        <dbReference type="ChEBI" id="CHEBI:24646"/>
        <dbReference type="ChEBI" id="CHEBI:57783"/>
        <dbReference type="ChEBI" id="CHEBI:58349"/>
        <dbReference type="ChEBI" id="CHEBI:132124"/>
        <dbReference type="EC" id="1.6.5.2"/>
    </reaction>
</comment>
<comment type="cofactor">
    <cofactor evidence="1">
        <name>FMN</name>
        <dbReference type="ChEBI" id="CHEBI:58210"/>
    </cofactor>
</comment>
<comment type="subunit">
    <text evidence="1">Homodimer. Interacts with KefC.</text>
</comment>
<comment type="subcellular location">
    <subcellularLocation>
        <location evidence="1">Cell inner membrane</location>
        <topology evidence="1">Peripheral membrane protein</topology>
        <orientation evidence="1">Cytoplasmic side</orientation>
    </subcellularLocation>
</comment>
<comment type="similarity">
    <text evidence="1">Belongs to the NAD(P)H dehydrogenase (quinone) family. KefF subfamily.</text>
</comment>
<proteinExistence type="inferred from homology"/>
<reference key="1">
    <citation type="journal article" date="2011" name="J. Bacteriol.">
        <title>Comparative genomics of 28 Salmonella enterica isolates: evidence for CRISPR-mediated adaptive sublineage evolution.</title>
        <authorList>
            <person name="Fricke W.F."/>
            <person name="Mammel M.K."/>
            <person name="McDermott P.F."/>
            <person name="Tartera C."/>
            <person name="White D.G."/>
            <person name="Leclerc J.E."/>
            <person name="Ravel J."/>
            <person name="Cebula T.A."/>
        </authorList>
    </citation>
    <scope>NUCLEOTIDE SEQUENCE [LARGE SCALE GENOMIC DNA]</scope>
    <source>
        <strain>SL483</strain>
    </source>
</reference>
<dbReference type="EC" id="1.6.5.2" evidence="1"/>
<dbReference type="EMBL" id="CP001138">
    <property type="protein sequence ID" value="ACH49054.1"/>
    <property type="molecule type" value="Genomic_DNA"/>
</dbReference>
<dbReference type="RefSeq" id="WP_000600706.1">
    <property type="nucleotide sequence ID" value="NC_011149.1"/>
</dbReference>
<dbReference type="SMR" id="B5F766"/>
<dbReference type="KEGG" id="sea:SeAg_B0094"/>
<dbReference type="HOGENOM" id="CLU_058643_0_2_6"/>
<dbReference type="Proteomes" id="UP000008819">
    <property type="component" value="Chromosome"/>
</dbReference>
<dbReference type="GO" id="GO:0005886">
    <property type="term" value="C:plasma membrane"/>
    <property type="evidence" value="ECO:0007669"/>
    <property type="project" value="UniProtKB-SubCell"/>
</dbReference>
<dbReference type="GO" id="GO:0009055">
    <property type="term" value="F:electron transfer activity"/>
    <property type="evidence" value="ECO:0007669"/>
    <property type="project" value="TreeGrafter"/>
</dbReference>
<dbReference type="GO" id="GO:0010181">
    <property type="term" value="F:FMN binding"/>
    <property type="evidence" value="ECO:0007669"/>
    <property type="project" value="UniProtKB-UniRule"/>
</dbReference>
<dbReference type="GO" id="GO:0050136">
    <property type="term" value="F:NADH:ubiquinone reductase (non-electrogenic) activity"/>
    <property type="evidence" value="ECO:0007669"/>
    <property type="project" value="RHEA"/>
</dbReference>
<dbReference type="GO" id="GO:0008753">
    <property type="term" value="F:NADPH dehydrogenase (quinone) activity"/>
    <property type="evidence" value="ECO:0007669"/>
    <property type="project" value="RHEA"/>
</dbReference>
<dbReference type="GO" id="GO:1901381">
    <property type="term" value="P:positive regulation of potassium ion transmembrane transport"/>
    <property type="evidence" value="ECO:0007669"/>
    <property type="project" value="UniProtKB-UniRule"/>
</dbReference>
<dbReference type="GO" id="GO:0006813">
    <property type="term" value="P:potassium ion transport"/>
    <property type="evidence" value="ECO:0007669"/>
    <property type="project" value="InterPro"/>
</dbReference>
<dbReference type="FunFam" id="3.40.50.360:FF:000008">
    <property type="entry name" value="Glutathione-regulated potassium-efflux system ancillary protein KefF"/>
    <property type="match status" value="1"/>
</dbReference>
<dbReference type="Gene3D" id="3.40.50.360">
    <property type="match status" value="1"/>
</dbReference>
<dbReference type="HAMAP" id="MF_01414">
    <property type="entry name" value="K_H_efflux_KefF"/>
    <property type="match status" value="1"/>
</dbReference>
<dbReference type="InterPro" id="IPR003680">
    <property type="entry name" value="Flavodoxin_fold"/>
</dbReference>
<dbReference type="InterPro" id="IPR029039">
    <property type="entry name" value="Flavoprotein-like_sf"/>
</dbReference>
<dbReference type="InterPro" id="IPR023948">
    <property type="entry name" value="K_H_efflux_KefF"/>
</dbReference>
<dbReference type="InterPro" id="IPR046980">
    <property type="entry name" value="KefG/KefF"/>
</dbReference>
<dbReference type="NCBIfam" id="NF002044">
    <property type="entry name" value="PRK00871.1"/>
    <property type="match status" value="1"/>
</dbReference>
<dbReference type="PANTHER" id="PTHR47307:SF2">
    <property type="entry name" value="GLUTATHIONE-REGULATED POTASSIUM-EFFLUX SYSTEM ANCILLARY PROTEIN KEFF"/>
    <property type="match status" value="1"/>
</dbReference>
<dbReference type="PANTHER" id="PTHR47307">
    <property type="entry name" value="GLUTATHIONE-REGULATED POTASSIUM-EFFLUX SYSTEM ANCILLARY PROTEIN KEFG"/>
    <property type="match status" value="1"/>
</dbReference>
<dbReference type="Pfam" id="PF02525">
    <property type="entry name" value="Flavodoxin_2"/>
    <property type="match status" value="1"/>
</dbReference>
<dbReference type="SUPFAM" id="SSF52218">
    <property type="entry name" value="Flavoproteins"/>
    <property type="match status" value="1"/>
</dbReference>
<feature type="chain" id="PRO_1000145563" description="Glutathione-regulated potassium-efflux system ancillary protein KefF">
    <location>
        <begin position="1"/>
        <end position="176"/>
    </location>
</feature>
<feature type="binding site" evidence="1">
    <location>
        <position position="8"/>
    </location>
    <ligand>
        <name>FMN</name>
        <dbReference type="ChEBI" id="CHEBI:58210"/>
    </ligand>
</feature>
<feature type="binding site" evidence="1">
    <location>
        <begin position="14"/>
        <end position="17"/>
    </location>
    <ligand>
        <name>FMN</name>
        <dbReference type="ChEBI" id="CHEBI:58210"/>
    </ligand>
</feature>
<feature type="binding site" evidence="1">
    <location>
        <begin position="65"/>
        <end position="68"/>
    </location>
    <ligand>
        <name>FMN</name>
        <dbReference type="ChEBI" id="CHEBI:58210"/>
    </ligand>
</feature>
<feature type="binding site" evidence="1">
    <location>
        <begin position="105"/>
        <end position="108"/>
    </location>
    <ligand>
        <name>FMN</name>
        <dbReference type="ChEBI" id="CHEBI:58210"/>
    </ligand>
</feature>
<gene>
    <name evidence="1" type="primary">kefF</name>
    <name type="ordered locus">SeAg_B0094</name>
</gene>
<sequence length="176" mass="20015">MILIIYAHPYPHHSHANKRMLEQAGTLENVEIRSLYHLYPDFNIDVAAEQEALSRASLIVWQHPMQWYSVPPLLKLWMDKVLTHGWAYGHGGTALHGKHLLWAVTTGGGENHFAIGSHPGFDVLSQPLQATALYCGLKWLPPFAMHCTFICDDDTLQAQARQYKQRLLAWQEVNHG</sequence>